<organism>
    <name type="scientific">Allorhizobium ampelinum (strain ATCC BAA-846 / DSM 112012 / S4)</name>
    <name type="common">Agrobacterium vitis (strain S4)</name>
    <dbReference type="NCBI Taxonomy" id="311402"/>
    <lineage>
        <taxon>Bacteria</taxon>
        <taxon>Pseudomonadati</taxon>
        <taxon>Pseudomonadota</taxon>
        <taxon>Alphaproteobacteria</taxon>
        <taxon>Hyphomicrobiales</taxon>
        <taxon>Rhizobiaceae</taxon>
        <taxon>Rhizobium/Agrobacterium group</taxon>
        <taxon>Allorhizobium</taxon>
        <taxon>Allorhizobium ampelinum</taxon>
    </lineage>
</organism>
<comment type="function">
    <text evidence="1">Succinyl-CoA synthetase functions in the citric acid cycle (TCA), coupling the hydrolysis of succinyl-CoA to the synthesis of either ATP or GTP and thus represents the only step of substrate-level phosphorylation in the TCA. The beta subunit provides nucleotide specificity of the enzyme and binds the substrate succinate, while the binding sites for coenzyme A and phosphate are found in the alpha subunit.</text>
</comment>
<comment type="catalytic activity">
    <reaction evidence="1">
        <text>succinate + ATP + CoA = succinyl-CoA + ADP + phosphate</text>
        <dbReference type="Rhea" id="RHEA:17661"/>
        <dbReference type="ChEBI" id="CHEBI:30031"/>
        <dbReference type="ChEBI" id="CHEBI:30616"/>
        <dbReference type="ChEBI" id="CHEBI:43474"/>
        <dbReference type="ChEBI" id="CHEBI:57287"/>
        <dbReference type="ChEBI" id="CHEBI:57292"/>
        <dbReference type="ChEBI" id="CHEBI:456216"/>
        <dbReference type="EC" id="6.2.1.5"/>
    </reaction>
    <physiologicalReaction direction="right-to-left" evidence="1">
        <dbReference type="Rhea" id="RHEA:17663"/>
    </physiologicalReaction>
</comment>
<comment type="catalytic activity">
    <reaction evidence="1">
        <text>GTP + succinate + CoA = succinyl-CoA + GDP + phosphate</text>
        <dbReference type="Rhea" id="RHEA:22120"/>
        <dbReference type="ChEBI" id="CHEBI:30031"/>
        <dbReference type="ChEBI" id="CHEBI:37565"/>
        <dbReference type="ChEBI" id="CHEBI:43474"/>
        <dbReference type="ChEBI" id="CHEBI:57287"/>
        <dbReference type="ChEBI" id="CHEBI:57292"/>
        <dbReference type="ChEBI" id="CHEBI:58189"/>
    </reaction>
    <physiologicalReaction direction="right-to-left" evidence="1">
        <dbReference type="Rhea" id="RHEA:22122"/>
    </physiologicalReaction>
</comment>
<comment type="cofactor">
    <cofactor evidence="1">
        <name>Mg(2+)</name>
        <dbReference type="ChEBI" id="CHEBI:18420"/>
    </cofactor>
    <text evidence="1">Binds 1 Mg(2+) ion per subunit.</text>
</comment>
<comment type="pathway">
    <text evidence="1">Carbohydrate metabolism; tricarboxylic acid cycle; succinate from succinyl-CoA (ligase route): step 1/1.</text>
</comment>
<comment type="subunit">
    <text evidence="1">Heterotetramer of two alpha and two beta subunits.</text>
</comment>
<comment type="similarity">
    <text evidence="1">Belongs to the succinate/malate CoA ligase beta subunit family.</text>
</comment>
<dbReference type="EC" id="6.2.1.5" evidence="1"/>
<dbReference type="EMBL" id="CP000633">
    <property type="protein sequence ID" value="ACM37986.1"/>
    <property type="molecule type" value="Genomic_DNA"/>
</dbReference>
<dbReference type="RefSeq" id="WP_015917397.1">
    <property type="nucleotide sequence ID" value="NC_011989.1"/>
</dbReference>
<dbReference type="SMR" id="B9JTS8"/>
<dbReference type="STRING" id="311402.Avi_4127"/>
<dbReference type="KEGG" id="avi:Avi_4127"/>
<dbReference type="eggNOG" id="COG0045">
    <property type="taxonomic scope" value="Bacteria"/>
</dbReference>
<dbReference type="HOGENOM" id="CLU_037430_0_2_5"/>
<dbReference type="UniPathway" id="UPA00223">
    <property type="reaction ID" value="UER00999"/>
</dbReference>
<dbReference type="Proteomes" id="UP000001596">
    <property type="component" value="Chromosome 1"/>
</dbReference>
<dbReference type="GO" id="GO:0005829">
    <property type="term" value="C:cytosol"/>
    <property type="evidence" value="ECO:0007669"/>
    <property type="project" value="TreeGrafter"/>
</dbReference>
<dbReference type="GO" id="GO:0042709">
    <property type="term" value="C:succinate-CoA ligase complex"/>
    <property type="evidence" value="ECO:0007669"/>
    <property type="project" value="TreeGrafter"/>
</dbReference>
<dbReference type="GO" id="GO:0005524">
    <property type="term" value="F:ATP binding"/>
    <property type="evidence" value="ECO:0007669"/>
    <property type="project" value="UniProtKB-UniRule"/>
</dbReference>
<dbReference type="GO" id="GO:0000287">
    <property type="term" value="F:magnesium ion binding"/>
    <property type="evidence" value="ECO:0007669"/>
    <property type="project" value="UniProtKB-UniRule"/>
</dbReference>
<dbReference type="GO" id="GO:0004775">
    <property type="term" value="F:succinate-CoA ligase (ADP-forming) activity"/>
    <property type="evidence" value="ECO:0007669"/>
    <property type="project" value="UniProtKB-UniRule"/>
</dbReference>
<dbReference type="GO" id="GO:0004776">
    <property type="term" value="F:succinate-CoA ligase (GDP-forming) activity"/>
    <property type="evidence" value="ECO:0007669"/>
    <property type="project" value="RHEA"/>
</dbReference>
<dbReference type="GO" id="GO:0006104">
    <property type="term" value="P:succinyl-CoA metabolic process"/>
    <property type="evidence" value="ECO:0007669"/>
    <property type="project" value="TreeGrafter"/>
</dbReference>
<dbReference type="GO" id="GO:0006099">
    <property type="term" value="P:tricarboxylic acid cycle"/>
    <property type="evidence" value="ECO:0007669"/>
    <property type="project" value="UniProtKB-UniRule"/>
</dbReference>
<dbReference type="FunFam" id="3.30.1490.20:FF:000002">
    <property type="entry name" value="Succinate--CoA ligase [ADP-forming] subunit beta"/>
    <property type="match status" value="1"/>
</dbReference>
<dbReference type="FunFam" id="3.30.470.20:FF:000002">
    <property type="entry name" value="Succinate--CoA ligase [ADP-forming] subunit beta"/>
    <property type="match status" value="1"/>
</dbReference>
<dbReference type="FunFam" id="3.40.50.261:FF:000001">
    <property type="entry name" value="Succinate--CoA ligase [ADP-forming] subunit beta"/>
    <property type="match status" value="1"/>
</dbReference>
<dbReference type="Gene3D" id="3.30.1490.20">
    <property type="entry name" value="ATP-grasp fold, A domain"/>
    <property type="match status" value="1"/>
</dbReference>
<dbReference type="Gene3D" id="3.30.470.20">
    <property type="entry name" value="ATP-grasp fold, B domain"/>
    <property type="match status" value="1"/>
</dbReference>
<dbReference type="Gene3D" id="3.40.50.261">
    <property type="entry name" value="Succinyl-CoA synthetase domains"/>
    <property type="match status" value="1"/>
</dbReference>
<dbReference type="HAMAP" id="MF_00558">
    <property type="entry name" value="Succ_CoA_beta"/>
    <property type="match status" value="1"/>
</dbReference>
<dbReference type="InterPro" id="IPR011761">
    <property type="entry name" value="ATP-grasp"/>
</dbReference>
<dbReference type="InterPro" id="IPR013650">
    <property type="entry name" value="ATP-grasp_succ-CoA_synth-type"/>
</dbReference>
<dbReference type="InterPro" id="IPR013815">
    <property type="entry name" value="ATP_grasp_subdomain_1"/>
</dbReference>
<dbReference type="InterPro" id="IPR017866">
    <property type="entry name" value="Succ-CoA_synthase_bsu_CS"/>
</dbReference>
<dbReference type="InterPro" id="IPR005811">
    <property type="entry name" value="SUCC_ACL_C"/>
</dbReference>
<dbReference type="InterPro" id="IPR005809">
    <property type="entry name" value="Succ_CoA_ligase-like_bsu"/>
</dbReference>
<dbReference type="InterPro" id="IPR016102">
    <property type="entry name" value="Succinyl-CoA_synth-like"/>
</dbReference>
<dbReference type="NCBIfam" id="NF001913">
    <property type="entry name" value="PRK00696.1"/>
    <property type="match status" value="1"/>
</dbReference>
<dbReference type="NCBIfam" id="TIGR01016">
    <property type="entry name" value="sucCoAbeta"/>
    <property type="match status" value="1"/>
</dbReference>
<dbReference type="PANTHER" id="PTHR11815:SF10">
    <property type="entry name" value="SUCCINATE--COA LIGASE [GDP-FORMING] SUBUNIT BETA, MITOCHONDRIAL"/>
    <property type="match status" value="1"/>
</dbReference>
<dbReference type="PANTHER" id="PTHR11815">
    <property type="entry name" value="SUCCINYL-COA SYNTHETASE BETA CHAIN"/>
    <property type="match status" value="1"/>
</dbReference>
<dbReference type="Pfam" id="PF08442">
    <property type="entry name" value="ATP-grasp_2"/>
    <property type="match status" value="1"/>
</dbReference>
<dbReference type="Pfam" id="PF00549">
    <property type="entry name" value="Ligase_CoA"/>
    <property type="match status" value="1"/>
</dbReference>
<dbReference type="PIRSF" id="PIRSF001554">
    <property type="entry name" value="SucCS_beta"/>
    <property type="match status" value="1"/>
</dbReference>
<dbReference type="SUPFAM" id="SSF56059">
    <property type="entry name" value="Glutathione synthetase ATP-binding domain-like"/>
    <property type="match status" value="1"/>
</dbReference>
<dbReference type="SUPFAM" id="SSF52210">
    <property type="entry name" value="Succinyl-CoA synthetase domains"/>
    <property type="match status" value="1"/>
</dbReference>
<dbReference type="PROSITE" id="PS50975">
    <property type="entry name" value="ATP_GRASP"/>
    <property type="match status" value="1"/>
</dbReference>
<dbReference type="PROSITE" id="PS01217">
    <property type="entry name" value="SUCCINYL_COA_LIG_3"/>
    <property type="match status" value="1"/>
</dbReference>
<proteinExistence type="inferred from homology"/>
<protein>
    <recommendedName>
        <fullName evidence="1">Succinate--CoA ligase [ADP-forming] subunit beta</fullName>
        <ecNumber evidence="1">6.2.1.5</ecNumber>
    </recommendedName>
    <alternativeName>
        <fullName evidence="1">Succinyl-CoA synthetase subunit beta</fullName>
        <shortName evidence="1">SCS-beta</shortName>
    </alternativeName>
</protein>
<name>SUCC_ALLAM</name>
<keyword id="KW-0067">ATP-binding</keyword>
<keyword id="KW-0436">Ligase</keyword>
<keyword id="KW-0460">Magnesium</keyword>
<keyword id="KW-0479">Metal-binding</keyword>
<keyword id="KW-0547">Nucleotide-binding</keyword>
<keyword id="KW-1185">Reference proteome</keyword>
<keyword id="KW-0816">Tricarboxylic acid cycle</keyword>
<gene>
    <name evidence="1" type="primary">sucC</name>
    <name type="ordered locus">Avi_4127</name>
</gene>
<reference key="1">
    <citation type="journal article" date="2009" name="J. Bacteriol.">
        <title>Genome sequences of three Agrobacterium biovars help elucidate the evolution of multichromosome genomes in bacteria.</title>
        <authorList>
            <person name="Slater S.C."/>
            <person name="Goldman B.S."/>
            <person name="Goodner B."/>
            <person name="Setubal J.C."/>
            <person name="Farrand S.K."/>
            <person name="Nester E.W."/>
            <person name="Burr T.J."/>
            <person name="Banta L."/>
            <person name="Dickerman A.W."/>
            <person name="Paulsen I."/>
            <person name="Otten L."/>
            <person name="Suen G."/>
            <person name="Welch R."/>
            <person name="Almeida N.F."/>
            <person name="Arnold F."/>
            <person name="Burton O.T."/>
            <person name="Du Z."/>
            <person name="Ewing A."/>
            <person name="Godsy E."/>
            <person name="Heisel S."/>
            <person name="Houmiel K.L."/>
            <person name="Jhaveri J."/>
            <person name="Lu J."/>
            <person name="Miller N.M."/>
            <person name="Norton S."/>
            <person name="Chen Q."/>
            <person name="Phoolcharoen W."/>
            <person name="Ohlin V."/>
            <person name="Ondrusek D."/>
            <person name="Pride N."/>
            <person name="Stricklin S.L."/>
            <person name="Sun J."/>
            <person name="Wheeler C."/>
            <person name="Wilson L."/>
            <person name="Zhu H."/>
            <person name="Wood D.W."/>
        </authorList>
    </citation>
    <scope>NUCLEOTIDE SEQUENCE [LARGE SCALE GENOMIC DNA]</scope>
    <source>
        <strain>ATCC BAA-846 / DSM 112012 / S4</strain>
    </source>
</reference>
<feature type="chain" id="PRO_1000197691" description="Succinate--CoA ligase [ADP-forming] subunit beta">
    <location>
        <begin position="1"/>
        <end position="398"/>
    </location>
</feature>
<feature type="domain" description="ATP-grasp" evidence="1">
    <location>
        <begin position="9"/>
        <end position="254"/>
    </location>
</feature>
<feature type="binding site" evidence="1">
    <location>
        <position position="46"/>
    </location>
    <ligand>
        <name>ATP</name>
        <dbReference type="ChEBI" id="CHEBI:30616"/>
    </ligand>
</feature>
<feature type="binding site" evidence="1">
    <location>
        <begin position="53"/>
        <end position="55"/>
    </location>
    <ligand>
        <name>ATP</name>
        <dbReference type="ChEBI" id="CHEBI:30616"/>
    </ligand>
</feature>
<feature type="binding site" evidence="1">
    <location>
        <position position="109"/>
    </location>
    <ligand>
        <name>ATP</name>
        <dbReference type="ChEBI" id="CHEBI:30616"/>
    </ligand>
</feature>
<feature type="binding site" evidence="1">
    <location>
        <position position="112"/>
    </location>
    <ligand>
        <name>ATP</name>
        <dbReference type="ChEBI" id="CHEBI:30616"/>
    </ligand>
</feature>
<feature type="binding site" evidence="1">
    <location>
        <position position="117"/>
    </location>
    <ligand>
        <name>ATP</name>
        <dbReference type="ChEBI" id="CHEBI:30616"/>
    </ligand>
</feature>
<feature type="binding site" evidence="1">
    <location>
        <position position="209"/>
    </location>
    <ligand>
        <name>Mg(2+)</name>
        <dbReference type="ChEBI" id="CHEBI:18420"/>
    </ligand>
</feature>
<feature type="binding site" evidence="1">
    <location>
        <position position="223"/>
    </location>
    <ligand>
        <name>Mg(2+)</name>
        <dbReference type="ChEBI" id="CHEBI:18420"/>
    </ligand>
</feature>
<feature type="binding site" evidence="1">
    <location>
        <position position="274"/>
    </location>
    <ligand>
        <name>substrate</name>
        <note>ligand shared with subunit alpha</note>
    </ligand>
</feature>
<feature type="binding site" evidence="1">
    <location>
        <begin position="331"/>
        <end position="333"/>
    </location>
    <ligand>
        <name>substrate</name>
        <note>ligand shared with subunit alpha</note>
    </ligand>
</feature>
<sequence length="398" mass="41959">MNIHEYQAKALLKSFGAPVAEGVAIFSADEAEAAAKQLPGPLYVVKSQIHAGGRGKGKFKELGPDAKGGVRLAFSIDEVKSHVAEMLGNTLVTNQTGPAGKQVNRLYIEDGADIERELYLSLLVDRAVGQVAFVVSTEGGMDIETVAHDTPEKIISVAIDPEAGVTAANLEALTAALLLEGEAKADAEKLFPILYKAFVEKDMALLEVNPLIVMKNGRMRVLDAKMSFDGNALFRHEDVVALRDKTEEDAKEIEASKYDLAYVALDGNIGCMVNGAGLAMATMDIIKLYGAEPANFLDVGGGATKEKVTAAFKIITADPAVKGILVNIFGGIMKCDVIAEGVLAAVKDVGLTVPLVVRLEGTNVELGKKIINESGLNVISADDLDDAAQKIVAAVKAA</sequence>
<evidence type="ECO:0000255" key="1">
    <source>
        <dbReference type="HAMAP-Rule" id="MF_00558"/>
    </source>
</evidence>
<accession>B9JTS8</accession>